<keyword id="KW-0413">Isomerase</keyword>
<keyword id="KW-1185">Reference proteome</keyword>
<gene>
    <name type="ordered locus">lp_1712</name>
</gene>
<accession>Q88WD0</accession>
<accession>F9UP73</accession>
<protein>
    <recommendedName>
        <fullName>Probable tautomerase lp_1712</fullName>
        <ecNumber>5.3.2.-</ecNumber>
    </recommendedName>
</protein>
<comment type="similarity">
    <text evidence="2">Belongs to the 4-oxalocrotonate tautomerase family.</text>
</comment>
<organism>
    <name type="scientific">Lactiplantibacillus plantarum (strain ATCC BAA-793 / NCIMB 8826 / WCFS1)</name>
    <name type="common">Lactobacillus plantarum</name>
    <dbReference type="NCBI Taxonomy" id="220668"/>
    <lineage>
        <taxon>Bacteria</taxon>
        <taxon>Bacillati</taxon>
        <taxon>Bacillota</taxon>
        <taxon>Bacilli</taxon>
        <taxon>Lactobacillales</taxon>
        <taxon>Lactobacillaceae</taxon>
        <taxon>Lactiplantibacillus</taxon>
    </lineage>
</organism>
<name>Y1712_LACPL</name>
<sequence>MPIVHIDLIAGRSQEQLKNLVKDVTDAVSKNTGAPAEHIHVILSEMQKNRYSVGGVLKSDEEAE</sequence>
<feature type="initiator methionine" description="Removed" evidence="1">
    <location>
        <position position="1"/>
    </location>
</feature>
<feature type="chain" id="PRO_0000209533" description="Probable tautomerase lp_1712">
    <location>
        <begin position="2"/>
        <end position="64"/>
    </location>
</feature>
<feature type="active site" description="Proton acceptor; via imino nitrogen" evidence="1">
    <location>
        <position position="2"/>
    </location>
</feature>
<evidence type="ECO:0000250" key="1"/>
<evidence type="ECO:0000305" key="2"/>
<reference key="1">
    <citation type="journal article" date="2003" name="Proc. Natl. Acad. Sci. U.S.A.">
        <title>Complete genome sequence of Lactobacillus plantarum WCFS1.</title>
        <authorList>
            <person name="Kleerebezem M."/>
            <person name="Boekhorst J."/>
            <person name="van Kranenburg R."/>
            <person name="Molenaar D."/>
            <person name="Kuipers O.P."/>
            <person name="Leer R."/>
            <person name="Tarchini R."/>
            <person name="Peters S.A."/>
            <person name="Sandbrink H.M."/>
            <person name="Fiers M.W.E.J."/>
            <person name="Stiekema W."/>
            <person name="Klein Lankhorst R.M."/>
            <person name="Bron P.A."/>
            <person name="Hoffer S.M."/>
            <person name="Nierop Groot M.N."/>
            <person name="Kerkhoven R."/>
            <person name="De Vries M."/>
            <person name="Ursing B."/>
            <person name="De Vos W.M."/>
            <person name="Siezen R.J."/>
        </authorList>
    </citation>
    <scope>NUCLEOTIDE SEQUENCE [LARGE SCALE GENOMIC DNA]</scope>
    <source>
        <strain>ATCC BAA-793 / NCIMB 8826 / WCFS1</strain>
    </source>
</reference>
<reference key="2">
    <citation type="journal article" date="2012" name="J. Bacteriol.">
        <title>Complete resequencing and reannotation of the Lactobacillus plantarum WCFS1 genome.</title>
        <authorList>
            <person name="Siezen R.J."/>
            <person name="Francke C."/>
            <person name="Renckens B."/>
            <person name="Boekhorst J."/>
            <person name="Wels M."/>
            <person name="Kleerebezem M."/>
            <person name="van Hijum S.A."/>
        </authorList>
    </citation>
    <scope>NUCLEOTIDE SEQUENCE [LARGE SCALE GENOMIC DNA]</scope>
    <scope>GENOME REANNOTATION</scope>
    <source>
        <strain>ATCC BAA-793 / NCIMB 8826 / WCFS1</strain>
    </source>
</reference>
<proteinExistence type="inferred from homology"/>
<dbReference type="EC" id="5.3.2.-"/>
<dbReference type="EMBL" id="AL935263">
    <property type="protein sequence ID" value="CCC79012.1"/>
    <property type="molecule type" value="Genomic_DNA"/>
</dbReference>
<dbReference type="RefSeq" id="WP_003638693.1">
    <property type="nucleotide sequence ID" value="NC_004567.2"/>
</dbReference>
<dbReference type="RefSeq" id="YP_004889526.1">
    <property type="nucleotide sequence ID" value="NC_004567.2"/>
</dbReference>
<dbReference type="SMR" id="Q88WD0"/>
<dbReference type="STRING" id="220668.lp_1712"/>
<dbReference type="EnsemblBacteria" id="CCC79012">
    <property type="protein sequence ID" value="CCC79012"/>
    <property type="gene ID" value="lp_1712"/>
</dbReference>
<dbReference type="KEGG" id="lpl:lp_1712"/>
<dbReference type="PATRIC" id="fig|220668.9.peg.1446"/>
<dbReference type="eggNOG" id="COG1942">
    <property type="taxonomic scope" value="Bacteria"/>
</dbReference>
<dbReference type="HOGENOM" id="CLU_148073_5_1_9"/>
<dbReference type="OrthoDB" id="5405937at2"/>
<dbReference type="PhylomeDB" id="Q88WD0"/>
<dbReference type="Proteomes" id="UP000000432">
    <property type="component" value="Chromosome"/>
</dbReference>
<dbReference type="GO" id="GO:0016853">
    <property type="term" value="F:isomerase activity"/>
    <property type="evidence" value="ECO:0007669"/>
    <property type="project" value="UniProtKB-KW"/>
</dbReference>
<dbReference type="Gene3D" id="3.30.429.10">
    <property type="entry name" value="Macrophage Migration Inhibitory Factor"/>
    <property type="match status" value="1"/>
</dbReference>
<dbReference type="InterPro" id="IPR018191">
    <property type="entry name" value="4-OT"/>
</dbReference>
<dbReference type="InterPro" id="IPR004370">
    <property type="entry name" value="4-OT-like_dom"/>
</dbReference>
<dbReference type="InterPro" id="IPR014347">
    <property type="entry name" value="Tautomerase/MIF_sf"/>
</dbReference>
<dbReference type="NCBIfam" id="NF002571">
    <property type="entry name" value="PRK02220.1"/>
    <property type="match status" value="1"/>
</dbReference>
<dbReference type="NCBIfam" id="TIGR00013">
    <property type="entry name" value="taut"/>
    <property type="match status" value="1"/>
</dbReference>
<dbReference type="PANTHER" id="PTHR35530:SF1">
    <property type="entry name" value="2-HYDROXYMUCONATE TAUTOMERASE"/>
    <property type="match status" value="1"/>
</dbReference>
<dbReference type="PANTHER" id="PTHR35530">
    <property type="entry name" value="TAUTOMERASE-RELATED"/>
    <property type="match status" value="1"/>
</dbReference>
<dbReference type="Pfam" id="PF01361">
    <property type="entry name" value="Tautomerase"/>
    <property type="match status" value="1"/>
</dbReference>
<dbReference type="SUPFAM" id="SSF55331">
    <property type="entry name" value="Tautomerase/MIF"/>
    <property type="match status" value="1"/>
</dbReference>